<organism>
    <name type="scientific">Homo sapiens</name>
    <name type="common">Human</name>
    <dbReference type="NCBI Taxonomy" id="9606"/>
    <lineage>
        <taxon>Eukaryota</taxon>
        <taxon>Metazoa</taxon>
        <taxon>Chordata</taxon>
        <taxon>Craniata</taxon>
        <taxon>Vertebrata</taxon>
        <taxon>Euteleostomi</taxon>
        <taxon>Mammalia</taxon>
        <taxon>Eutheria</taxon>
        <taxon>Euarchontoglires</taxon>
        <taxon>Primates</taxon>
        <taxon>Haplorrhini</taxon>
        <taxon>Catarrhini</taxon>
        <taxon>Hominidae</taxon>
        <taxon>Homo</taxon>
    </lineage>
</organism>
<sequence>MEHSTFLSGLVLATLLSQVSPFKIPIEELEDRVFVNCNTSITWVEGTVGTLLSDITRLDLGKRILDPRGIYRCNGTDIYKDKESTVQVHYRMCQSCVELDPATVAGIIVTDVIATLLLALGVFCFAGHETGRLSGAADTQALLRNDQVYQPLRDRDDAQYSHLGGNWARNK</sequence>
<feature type="signal peptide">
    <location>
        <begin position="1"/>
        <end position="21"/>
    </location>
</feature>
<feature type="chain" id="PRO_0000016487" description="T-cell surface glycoprotein CD3 delta chain">
    <location>
        <begin position="22"/>
        <end position="171"/>
    </location>
</feature>
<feature type="topological domain" description="Extracellular" evidence="1">
    <location>
        <begin position="22"/>
        <end position="105"/>
    </location>
</feature>
<feature type="transmembrane region" description="Helical" evidence="1">
    <location>
        <begin position="106"/>
        <end position="126"/>
    </location>
</feature>
<feature type="topological domain" description="Cytoplasmic" evidence="1">
    <location>
        <begin position="127"/>
        <end position="171"/>
    </location>
</feature>
<feature type="domain" description="ITAM" evidence="2">
    <location>
        <begin position="138"/>
        <end position="166"/>
    </location>
</feature>
<feature type="modified residue" description="Phosphotyrosine" evidence="14 15">
    <location>
        <position position="149"/>
    </location>
</feature>
<feature type="modified residue" description="Phosphotyrosine" evidence="16">
    <location>
        <position position="160"/>
    </location>
</feature>
<feature type="glycosylation site" description="N-linked (GlcNAc...) asparagine" evidence="1">
    <location>
        <position position="38"/>
    </location>
</feature>
<feature type="glycosylation site" description="N-linked (GlcNAc...) asparagine" evidence="1">
    <location>
        <position position="74"/>
    </location>
</feature>
<feature type="disulfide bond" evidence="8">
    <location>
        <begin position="37"/>
        <end position="73"/>
    </location>
</feature>
<feature type="splice variant" id="VSP_045800" description="In isoform 2." evidence="13">
    <original>MCQSCVELDPATVAGIIVTDVIATLLLALGVFCFAGHETGRLSGA</original>
    <variation>T</variation>
    <location>
        <begin position="92"/>
        <end position="136"/>
    </location>
</feature>
<feature type="sequence variant" id="VAR_049646" description="In dbSNP:rs45510201.">
    <original>Q</original>
    <variation>R</variation>
    <location>
        <position position="147"/>
    </location>
</feature>
<feature type="strand" evidence="17">
    <location>
        <begin position="26"/>
        <end position="29"/>
    </location>
</feature>
<feature type="strand" evidence="17">
    <location>
        <begin position="32"/>
        <end position="36"/>
    </location>
</feature>
<feature type="strand" evidence="17">
    <location>
        <begin position="41"/>
        <end position="46"/>
    </location>
</feature>
<feature type="strand" evidence="17">
    <location>
        <begin position="50"/>
        <end position="52"/>
    </location>
</feature>
<feature type="helix" evidence="17">
    <location>
        <begin position="53"/>
        <end position="55"/>
    </location>
</feature>
<feature type="strand" evidence="17">
    <location>
        <begin position="57"/>
        <end position="62"/>
    </location>
</feature>
<feature type="helix" evidence="17">
    <location>
        <begin position="63"/>
        <end position="65"/>
    </location>
</feature>
<feature type="strand" evidence="17">
    <location>
        <begin position="68"/>
        <end position="73"/>
    </location>
</feature>
<feature type="strand" evidence="19">
    <location>
        <begin position="76"/>
        <end position="78"/>
    </location>
</feature>
<feature type="helix" evidence="18">
    <location>
        <begin position="79"/>
        <end position="81"/>
    </location>
</feature>
<feature type="strand" evidence="17">
    <location>
        <begin position="84"/>
        <end position="91"/>
    </location>
</feature>
<feature type="strand" evidence="19">
    <location>
        <begin position="94"/>
        <end position="98"/>
    </location>
</feature>
<feature type="helix" evidence="19">
    <location>
        <begin position="101"/>
        <end position="126"/>
    </location>
</feature>
<keyword id="KW-0002">3D-structure</keyword>
<keyword id="KW-1064">Adaptive immunity</keyword>
<keyword id="KW-0025">Alternative splicing</keyword>
<keyword id="KW-1003">Cell membrane</keyword>
<keyword id="KW-0903">Direct protein sequencing</keyword>
<keyword id="KW-1015">Disulfide bond</keyword>
<keyword id="KW-0325">Glycoprotein</keyword>
<keyword id="KW-0391">Immunity</keyword>
<keyword id="KW-0472">Membrane</keyword>
<keyword id="KW-0597">Phosphoprotein</keyword>
<keyword id="KW-1267">Proteomics identification</keyword>
<keyword id="KW-0675">Receptor</keyword>
<keyword id="KW-1185">Reference proteome</keyword>
<keyword id="KW-0705">SCID</keyword>
<keyword id="KW-0732">Signal</keyword>
<keyword id="KW-0812">Transmembrane</keyword>
<keyword id="KW-1133">Transmembrane helix</keyword>
<comment type="function">
    <text evidence="3 4 12">Part of the TCR-CD3 complex present on T-lymphocyte cell surface that plays an essential role in adaptive immune response. When antigen presenting cells (APCs) activate T-cell receptor (TCR), TCR-mediated signals are transmitted across the cell membrane by the CD3 chains CD3D, CD3E, CD3G and CD3Z. All CD3 chains contain immunoreceptor tyrosine-based activation motifs (ITAMs) in their cytoplasmic domain. Upon TCR engagement, these motifs become phosphorylated by Src family protein tyrosine kinases LCK and FYN, resulting in the activation of downstream signaling pathways (PubMed:2470098). In addition of this role of signal transduction in T-cell activation, CD3D plays an essential role in thymocyte differentiation. Indeed, participates in correct intracellular TCR-CD3 complex assembly and surface expression. In absence of a functional TCR-CD3 complex, thymocytes are unable to differentiate properly. Interacts with CD4 and CD8 and thus serves to establish a functional link between the TCR and coreceptors CD4 and CD8, which is needed for activation and positive selection of CD4 or CD8 T-cells (PubMed:12215456).</text>
</comment>
<comment type="subunit">
    <text evidence="3 4 6 8 10">The TCR-CD3 complex is composed of a CD3D/CD3E and a CD3G/CD3E heterodimers that preferentially associate with TCRalpha and TCRbeta, respectively, to form TCRalpha/CD3E/CD3G and TCRbeta/CD3G/CD3E trimers. In turn, the hexamer interacts with CD3Z homodimer to form the TCR-CD3 complex. Alternatively, TCRalpha and TCRbeta can be replaced by TCRgamma and TCRdelta. Interacts with coreceptors CD4 and CD8 (PubMed:12215456, PubMed:1396954).</text>
</comment>
<comment type="interaction">
    <interactant intactId="EBI-3862416">
        <id>P04234</id>
    </interactant>
    <interactant intactId="EBI-744081">
        <id>Q96EQ0</id>
        <label>SGTB</label>
    </interactant>
    <organismsDiffer>false</organismsDiffer>
    <experiments>3</experiments>
</comment>
<comment type="subcellular location">
    <subcellularLocation>
        <location>Cell membrane</location>
        <topology>Single-pass type I membrane protein</topology>
    </subcellularLocation>
</comment>
<comment type="alternative products">
    <event type="alternative splicing"/>
    <isoform>
        <id>P04234-1</id>
        <name>1</name>
        <sequence type="displayed"/>
    </isoform>
    <isoform>
        <id>P04234-2</id>
        <name>2</name>
        <sequence type="described" ref="VSP_045800"/>
    </isoform>
</comment>
<comment type="tissue specificity">
    <text evidence="5">CD3D is mostly present on T-lymphocytes with its TCR-CD3 partners. Present also in fetal NK-cells.</text>
</comment>
<comment type="PTM">
    <text evidence="12">Phosphorylated on Tyr residues after T-cell receptor triggering by LCK in association with CD4/CD8.</text>
</comment>
<comment type="disease" evidence="7 9 11">
    <disease id="DI-04027">
        <name>Immunodeficiency 19, severe combined</name>
        <acronym>IMD19</acronym>
        <description>An autosomal recessive form of severe combined immunodeficiency characterized by onset in early infancy of recurrent bacterial, viral, and fungal infections. Patients usually have chronic diarrhea, recurrent respiratory infections, and failure to thrive. Immunologic work-up shows a T-cell negative, B-cell positive, NK-cell positive phenotype.</description>
        <dbReference type="MIM" id="615617"/>
    </disease>
    <text>The disease is caused by variants affecting the gene represented in this entry.</text>
</comment>
<comment type="online information" name="CD3Dbase">
    <link uri="https://databases.lovd.nl/shared/genes/CD3D"/>
    <text>CD3D mutation db</text>
</comment>
<name>CD3D_HUMAN</name>
<accession>P04234</accession>
<accession>A8MVP6</accession>
<dbReference type="EMBL" id="X03934">
    <property type="protein sequence ID" value="CAA27573.1"/>
    <property type="molecule type" value="Genomic_DNA"/>
</dbReference>
<dbReference type="EMBL" id="M12727">
    <property type="protein sequence ID" value="AAA51792.1"/>
    <property type="molecule type" value="Genomic_DNA"/>
</dbReference>
<dbReference type="EMBL" id="M12726">
    <property type="protein sequence ID" value="AAA51792.1"/>
    <property type="status" value="JOINED"/>
    <property type="molecule type" value="Genomic_DNA"/>
</dbReference>
<dbReference type="EMBL" id="CD014058">
    <property type="status" value="NOT_ANNOTATED_CDS"/>
    <property type="molecule type" value="mRNA"/>
</dbReference>
<dbReference type="EMBL" id="AP001582">
    <property type="status" value="NOT_ANNOTATED_CDS"/>
    <property type="molecule type" value="Genomic_DNA"/>
</dbReference>
<dbReference type="EMBL" id="BC039035">
    <property type="protein sequence ID" value="AAH39035.1"/>
    <property type="molecule type" value="mRNA"/>
</dbReference>
<dbReference type="EMBL" id="BC070321">
    <property type="protein sequence ID" value="AAH70321.1"/>
    <property type="molecule type" value="mRNA"/>
</dbReference>
<dbReference type="EMBL" id="X01451">
    <property type="protein sequence ID" value="CAA25683.1"/>
    <property type="molecule type" value="Genomic_DNA"/>
</dbReference>
<dbReference type="CCDS" id="CCDS41724.1">
    <molecule id="P04234-2"/>
</dbReference>
<dbReference type="CCDS" id="CCDS8394.1">
    <molecule id="P04234-1"/>
</dbReference>
<dbReference type="PIR" id="A94706">
    <property type="entry name" value="RWHUD1"/>
</dbReference>
<dbReference type="RefSeq" id="NP_000723.1">
    <molecule id="P04234-1"/>
    <property type="nucleotide sequence ID" value="NM_000732.6"/>
</dbReference>
<dbReference type="RefSeq" id="NP_001035741.1">
    <molecule id="P04234-2"/>
    <property type="nucleotide sequence ID" value="NM_001040651.2"/>
</dbReference>
<dbReference type="RefSeq" id="XP_016874032.1">
    <property type="nucleotide sequence ID" value="XM_017018543.1"/>
</dbReference>
<dbReference type="RefSeq" id="XP_054226455.1">
    <molecule id="P04234-1"/>
    <property type="nucleotide sequence ID" value="XM_054370480.1"/>
</dbReference>
<dbReference type="PDB" id="1XIW">
    <property type="method" value="X-ray"/>
    <property type="resolution" value="1.90 A"/>
    <property type="chains" value="B/F=23-100"/>
</dbReference>
<dbReference type="PDB" id="6JXR">
    <property type="method" value="EM"/>
    <property type="resolution" value="3.70 A"/>
    <property type="chains" value="d=1-171"/>
</dbReference>
<dbReference type="PDB" id="7FJD">
    <property type="method" value="EM"/>
    <property type="resolution" value="3.20 A"/>
    <property type="chains" value="d=1-171"/>
</dbReference>
<dbReference type="PDB" id="7FJE">
    <property type="method" value="EM"/>
    <property type="resolution" value="3.00 A"/>
    <property type="chains" value="d=1-171"/>
</dbReference>
<dbReference type="PDB" id="7FJF">
    <property type="method" value="EM"/>
    <property type="resolution" value="3.10 A"/>
    <property type="chains" value="d=1-171"/>
</dbReference>
<dbReference type="PDB" id="7PHR">
    <property type="method" value="EM"/>
    <property type="resolution" value="3.08 A"/>
    <property type="chains" value="D=22-132"/>
</dbReference>
<dbReference type="PDB" id="8ES7">
    <property type="method" value="EM"/>
    <property type="resolution" value="3.04 A"/>
    <property type="chains" value="D=1-171"/>
</dbReference>
<dbReference type="PDB" id="8ES8">
    <property type="method" value="EM"/>
    <property type="resolution" value="2.65 A"/>
    <property type="chains" value="D=1-171"/>
</dbReference>
<dbReference type="PDB" id="8ES9">
    <property type="method" value="EM"/>
    <property type="resolution" value="3.25 A"/>
    <property type="chains" value="D=1-171"/>
</dbReference>
<dbReference type="PDB" id="8JC0">
    <property type="method" value="EM"/>
    <property type="resolution" value="3.40 A"/>
    <property type="chains" value="d=1-171"/>
</dbReference>
<dbReference type="PDB" id="8JCB">
    <property type="method" value="EM"/>
    <property type="resolution" value="9.50 A"/>
    <property type="chains" value="D/d=1-171"/>
</dbReference>
<dbReference type="PDB" id="8TW4">
    <property type="method" value="EM"/>
    <property type="resolution" value="3.30 A"/>
    <property type="chains" value="D=1-171"/>
</dbReference>
<dbReference type="PDB" id="8TW6">
    <property type="method" value="EM"/>
    <property type="resolution" value="3.10 A"/>
    <property type="chains" value="D=1-171"/>
</dbReference>
<dbReference type="PDB" id="8WXE">
    <property type="method" value="EM"/>
    <property type="resolution" value="4.00 A"/>
    <property type="chains" value="d=1-171"/>
</dbReference>
<dbReference type="PDB" id="8WY0">
    <property type="method" value="EM"/>
    <property type="resolution" value="3.80 A"/>
    <property type="chains" value="d=1-171"/>
</dbReference>
<dbReference type="PDB" id="8WYI">
    <property type="method" value="EM"/>
    <property type="resolution" value="3.90 A"/>
    <property type="chains" value="d=1-171"/>
</dbReference>
<dbReference type="PDB" id="8YC0">
    <property type="method" value="EM"/>
    <property type="resolution" value="4.12 A"/>
    <property type="chains" value="d=1-171"/>
</dbReference>
<dbReference type="PDB" id="9BBC">
    <property type="method" value="EM"/>
    <property type="resolution" value="3.30 A"/>
    <property type="chains" value="D=1-171"/>
</dbReference>
<dbReference type="PDB" id="9C3E">
    <property type="method" value="EM"/>
    <property type="resolution" value="3.50 A"/>
    <property type="chains" value="D=1-125"/>
</dbReference>
<dbReference type="PDB" id="9CI8">
    <property type="method" value="EM"/>
    <property type="resolution" value="3.01 A"/>
    <property type="chains" value="d=22-126"/>
</dbReference>
<dbReference type="PDB" id="9CIA">
    <property type="method" value="EM"/>
    <property type="resolution" value="3.39 A"/>
    <property type="chains" value="d=22-127"/>
</dbReference>
<dbReference type="PDB" id="9CQ4">
    <property type="method" value="EM"/>
    <property type="resolution" value="3.27 A"/>
    <property type="chains" value="K=1-171"/>
</dbReference>
<dbReference type="PDBsum" id="1XIW"/>
<dbReference type="PDBsum" id="6JXR"/>
<dbReference type="PDBsum" id="7FJD"/>
<dbReference type="PDBsum" id="7FJE"/>
<dbReference type="PDBsum" id="7FJF"/>
<dbReference type="PDBsum" id="7PHR"/>
<dbReference type="PDBsum" id="8ES7"/>
<dbReference type="PDBsum" id="8ES8"/>
<dbReference type="PDBsum" id="8ES9"/>
<dbReference type="PDBsum" id="8JC0"/>
<dbReference type="PDBsum" id="8JCB"/>
<dbReference type="PDBsum" id="8TW4"/>
<dbReference type="PDBsum" id="8TW6"/>
<dbReference type="PDBsum" id="8WXE"/>
<dbReference type="PDBsum" id="8WY0"/>
<dbReference type="PDBsum" id="8WYI"/>
<dbReference type="PDBsum" id="8YC0"/>
<dbReference type="PDBsum" id="9BBC"/>
<dbReference type="PDBsum" id="9C3E"/>
<dbReference type="PDBsum" id="9CI8"/>
<dbReference type="PDBsum" id="9CIA"/>
<dbReference type="PDBsum" id="9CQ4"/>
<dbReference type="EMDB" id="EMD-13427"/>
<dbReference type="EMDB" id="EMD-28570"/>
<dbReference type="EMDB" id="EMD-28571"/>
<dbReference type="EMDB" id="EMD-28572"/>
<dbReference type="EMDB" id="EMD-31618"/>
<dbReference type="EMDB" id="EMD-31619"/>
<dbReference type="EMDB" id="EMD-31620"/>
<dbReference type="EMDB" id="EMD-36149"/>
<dbReference type="EMDB" id="EMD-36156"/>
<dbReference type="EMDB" id="EMD-37904"/>
<dbReference type="EMDB" id="EMD-37914"/>
<dbReference type="EMDB" id="EMD-37929"/>
<dbReference type="EMDB" id="EMD-39128"/>
<dbReference type="EMDB" id="EMD-41658"/>
<dbReference type="EMDB" id="EMD-41660"/>
<dbReference type="EMDB" id="EMD-44417"/>
<dbReference type="EMDB" id="EMD-45166"/>
<dbReference type="EMDB" id="EMD-45614"/>
<dbReference type="EMDB" id="EMD-45615"/>
<dbReference type="EMDB" id="EMD-45808"/>
<dbReference type="EMDB" id="EMD-9895"/>
<dbReference type="SMR" id="P04234"/>
<dbReference type="BioGRID" id="107353">
    <property type="interactions" value="85"/>
</dbReference>
<dbReference type="ComplexPortal" id="CPX-6482">
    <property type="entry name" value="Alpha-beta T cell receptor complex, TRBC2 variant"/>
</dbReference>
<dbReference type="ComplexPortal" id="CPX-6581">
    <property type="entry name" value="Alpha-beta T cell receptor complex, TRBC1 variant"/>
</dbReference>
<dbReference type="CORUM" id="P04234"/>
<dbReference type="DIP" id="DIP-42855N"/>
<dbReference type="ELM" id="P04234"/>
<dbReference type="FunCoup" id="P04234">
    <property type="interactions" value="239"/>
</dbReference>
<dbReference type="IntAct" id="P04234">
    <property type="interactions" value="66"/>
</dbReference>
<dbReference type="MINT" id="P04234"/>
<dbReference type="STRING" id="9606.ENSP00000300692"/>
<dbReference type="ChEMBL" id="CHEMBL2364168"/>
<dbReference type="DrugBank" id="DB09052">
    <property type="generic name" value="Blinatumomab"/>
</dbReference>
<dbReference type="DrugBank" id="DB15395">
    <property type="generic name" value="Elranatamab"/>
</dbReference>
<dbReference type="DrugBank" id="DB16371">
    <property type="generic name" value="Glofitamab"/>
</dbReference>
<dbReference type="DrugBank" id="DB00075">
    <property type="generic name" value="Muromonab"/>
</dbReference>
<dbReference type="DrugBank" id="DB16684">
    <property type="generic name" value="Odronextamab"/>
</dbReference>
<dbReference type="DrugBank" id="DB16678">
    <property type="generic name" value="Talquetamab"/>
</dbReference>
<dbReference type="DrugBank" id="DB17256">
    <property type="generic name" value="Tarlatamab"/>
</dbReference>
<dbReference type="DrugBank" id="DB16655">
    <property type="generic name" value="Teclistamab"/>
</dbReference>
<dbReference type="DrugCentral" id="P04234"/>
<dbReference type="GlyCosmos" id="P04234">
    <property type="glycosylation" value="2 sites, No reported glycans"/>
</dbReference>
<dbReference type="GlyGen" id="P04234">
    <property type="glycosylation" value="2 sites, 10 N-linked glycans (1 site)"/>
</dbReference>
<dbReference type="iPTMnet" id="P04234"/>
<dbReference type="PhosphoSitePlus" id="P04234"/>
<dbReference type="SwissPalm" id="P04234"/>
<dbReference type="BioMuta" id="CD3D"/>
<dbReference type="DMDM" id="115985"/>
<dbReference type="MassIVE" id="P04234"/>
<dbReference type="PaxDb" id="9606-ENSP00000300692"/>
<dbReference type="PeptideAtlas" id="P04234"/>
<dbReference type="ProteomicsDB" id="2194"/>
<dbReference type="ProteomicsDB" id="51692">
    <molecule id="P04234-1"/>
</dbReference>
<dbReference type="ABCD" id="P04234">
    <property type="antibodies" value="1 sequenced antibody"/>
</dbReference>
<dbReference type="Antibodypedia" id="4581">
    <property type="antibodies" value="914 antibodies from 43 providers"/>
</dbReference>
<dbReference type="DNASU" id="915"/>
<dbReference type="Ensembl" id="ENST00000300692.9">
    <molecule id="P04234-1"/>
    <property type="protein sequence ID" value="ENSP00000300692.4"/>
    <property type="gene ID" value="ENSG00000167286.12"/>
</dbReference>
<dbReference type="Ensembl" id="ENST00000392884.3">
    <molecule id="P04234-2"/>
    <property type="protein sequence ID" value="ENSP00000376622.2"/>
    <property type="gene ID" value="ENSG00000167286.12"/>
</dbReference>
<dbReference type="GeneID" id="915"/>
<dbReference type="KEGG" id="hsa:915"/>
<dbReference type="MANE-Select" id="ENST00000300692.9">
    <property type="protein sequence ID" value="ENSP00000300692.4"/>
    <property type="RefSeq nucleotide sequence ID" value="NM_000732.6"/>
    <property type="RefSeq protein sequence ID" value="NP_000723.1"/>
</dbReference>
<dbReference type="UCSC" id="uc001pss.2">
    <molecule id="P04234-1"/>
    <property type="organism name" value="human"/>
</dbReference>
<dbReference type="AGR" id="HGNC:1673"/>
<dbReference type="CTD" id="915"/>
<dbReference type="DisGeNET" id="915"/>
<dbReference type="GeneCards" id="CD3D"/>
<dbReference type="HGNC" id="HGNC:1673">
    <property type="gene designation" value="CD3D"/>
</dbReference>
<dbReference type="HPA" id="ENSG00000167286">
    <property type="expression patterns" value="Tissue enriched (lymphoid)"/>
</dbReference>
<dbReference type="MalaCards" id="CD3D"/>
<dbReference type="MIM" id="186790">
    <property type="type" value="gene"/>
</dbReference>
<dbReference type="MIM" id="615617">
    <property type="type" value="phenotype"/>
</dbReference>
<dbReference type="neXtProt" id="NX_P04234"/>
<dbReference type="OpenTargets" id="ENSG00000167286"/>
<dbReference type="Orphanet" id="169160">
    <property type="disease" value="T-B+ severe combined immunodeficiency due to CD3delta/CD3epsilon/CD3zeta"/>
</dbReference>
<dbReference type="PharmGKB" id="PA26215"/>
<dbReference type="VEuPathDB" id="HostDB:ENSG00000167286"/>
<dbReference type="eggNOG" id="ENOG502S4XC">
    <property type="taxonomic scope" value="Eukaryota"/>
</dbReference>
<dbReference type="GeneTree" id="ENSGT00940000153312"/>
<dbReference type="HOGENOM" id="CLU_115449_0_0_1"/>
<dbReference type="InParanoid" id="P04234"/>
<dbReference type="OMA" id="YQPLRDH"/>
<dbReference type="OrthoDB" id="8941324at2759"/>
<dbReference type="PAN-GO" id="P04234">
    <property type="GO annotations" value="5 GO annotations based on evolutionary models"/>
</dbReference>
<dbReference type="PhylomeDB" id="P04234"/>
<dbReference type="TreeFam" id="TF335892"/>
<dbReference type="PathwayCommons" id="P04234"/>
<dbReference type="Reactome" id="R-HSA-198933">
    <property type="pathway name" value="Immunoregulatory interactions between a Lymphoid and a non-Lymphoid cell"/>
</dbReference>
<dbReference type="Reactome" id="R-HSA-202424">
    <property type="pathway name" value="Downstream TCR signaling"/>
</dbReference>
<dbReference type="Reactome" id="R-HSA-202427">
    <property type="pathway name" value="Phosphorylation of CD3 and TCR zeta chains"/>
</dbReference>
<dbReference type="Reactome" id="R-HSA-202430">
    <property type="pathway name" value="Translocation of ZAP-70 to Immunological synapse"/>
</dbReference>
<dbReference type="Reactome" id="R-HSA-202433">
    <property type="pathway name" value="Generation of second messenger molecules"/>
</dbReference>
<dbReference type="Reactome" id="R-HSA-389948">
    <property type="pathway name" value="Co-inhibition by PD-1"/>
</dbReference>
<dbReference type="Reactome" id="R-HSA-8856825">
    <property type="pathway name" value="Cargo recognition for clathrin-mediated endocytosis"/>
</dbReference>
<dbReference type="Reactome" id="R-HSA-8856828">
    <property type="pathway name" value="Clathrin-mediated endocytosis"/>
</dbReference>
<dbReference type="SignaLink" id="P04234"/>
<dbReference type="SIGNOR" id="P04234"/>
<dbReference type="BioGRID-ORCS" id="915">
    <property type="hits" value="122 hits in 1160 CRISPR screens"/>
</dbReference>
<dbReference type="ChiTaRS" id="CD3D">
    <property type="organism name" value="human"/>
</dbReference>
<dbReference type="EvolutionaryTrace" id="P04234"/>
<dbReference type="GeneWiki" id="CD3D"/>
<dbReference type="GenomeRNAi" id="915"/>
<dbReference type="Pharos" id="P04234">
    <property type="development level" value="Tclin"/>
</dbReference>
<dbReference type="PRO" id="PR:P04234"/>
<dbReference type="Proteomes" id="UP000005640">
    <property type="component" value="Chromosome 11"/>
</dbReference>
<dbReference type="RNAct" id="P04234">
    <property type="molecule type" value="protein"/>
</dbReference>
<dbReference type="Bgee" id="ENSG00000167286">
    <property type="expression patterns" value="Expressed in thymus and 163 other cell types or tissues"/>
</dbReference>
<dbReference type="ExpressionAtlas" id="P04234">
    <property type="expression patterns" value="baseline and differential"/>
</dbReference>
<dbReference type="GO" id="GO:0042105">
    <property type="term" value="C:alpha-beta T cell receptor complex"/>
    <property type="evidence" value="ECO:0000314"/>
    <property type="project" value="UniProtKB"/>
</dbReference>
<dbReference type="GO" id="GO:0030669">
    <property type="term" value="C:clathrin-coated endocytic vesicle membrane"/>
    <property type="evidence" value="ECO:0000304"/>
    <property type="project" value="Reactome"/>
</dbReference>
<dbReference type="GO" id="GO:0005737">
    <property type="term" value="C:cytoplasm"/>
    <property type="evidence" value="ECO:0000303"/>
    <property type="project" value="UniProtKB"/>
</dbReference>
<dbReference type="GO" id="GO:0009897">
    <property type="term" value="C:external side of plasma membrane"/>
    <property type="evidence" value="ECO:0000318"/>
    <property type="project" value="GO_Central"/>
</dbReference>
<dbReference type="GO" id="GO:0005886">
    <property type="term" value="C:plasma membrane"/>
    <property type="evidence" value="ECO:0000314"/>
    <property type="project" value="ComplexPortal"/>
</dbReference>
<dbReference type="GO" id="GO:0042101">
    <property type="term" value="C:T cell receptor complex"/>
    <property type="evidence" value="ECO:0000314"/>
    <property type="project" value="MGI"/>
</dbReference>
<dbReference type="GO" id="GO:0042802">
    <property type="term" value="F:identical protein binding"/>
    <property type="evidence" value="ECO:0000314"/>
    <property type="project" value="CAFA"/>
</dbReference>
<dbReference type="GO" id="GO:0004888">
    <property type="term" value="F:transmembrane signaling receptor activity"/>
    <property type="evidence" value="ECO:0000318"/>
    <property type="project" value="GO_Central"/>
</dbReference>
<dbReference type="GO" id="GO:0002250">
    <property type="term" value="P:adaptive immune response"/>
    <property type="evidence" value="ECO:0000303"/>
    <property type="project" value="ComplexPortal"/>
</dbReference>
<dbReference type="GO" id="GO:0046631">
    <property type="term" value="P:alpha-beta T cell activation"/>
    <property type="evidence" value="ECO:0000303"/>
    <property type="project" value="ComplexPortal"/>
</dbReference>
<dbReference type="GO" id="GO:0007166">
    <property type="term" value="P:cell surface receptor signaling pathway"/>
    <property type="evidence" value="ECO:0000318"/>
    <property type="project" value="GO_Central"/>
</dbReference>
<dbReference type="GO" id="GO:0045059">
    <property type="term" value="P:positive thymic T cell selection"/>
    <property type="evidence" value="ECO:0000250"/>
    <property type="project" value="UniProtKB"/>
</dbReference>
<dbReference type="GO" id="GO:0050852">
    <property type="term" value="P:T cell receptor signaling pathway"/>
    <property type="evidence" value="ECO:0000303"/>
    <property type="project" value="ComplexPortal"/>
</dbReference>
<dbReference type="CDD" id="cd07691">
    <property type="entry name" value="IgC1_CD3_gamma_delta"/>
    <property type="match status" value="1"/>
</dbReference>
<dbReference type="DisProt" id="DP00505"/>
<dbReference type="FunFam" id="2.60.40.10:FF:001361">
    <property type="entry name" value="T-cell surface glycoprotein CD3 delta chain"/>
    <property type="match status" value="1"/>
</dbReference>
<dbReference type="Gene3D" id="2.60.40.10">
    <property type="entry name" value="Immunoglobulins"/>
    <property type="match status" value="1"/>
</dbReference>
<dbReference type="Gene3D" id="1.10.287.770">
    <property type="entry name" value="YojJ-like"/>
    <property type="match status" value="1"/>
</dbReference>
<dbReference type="InterPro" id="IPR015484">
    <property type="entry name" value="CD3_esu/gsu/dsu"/>
</dbReference>
<dbReference type="InterPro" id="IPR036179">
    <property type="entry name" value="Ig-like_dom_sf"/>
</dbReference>
<dbReference type="InterPro" id="IPR013783">
    <property type="entry name" value="Ig-like_fold"/>
</dbReference>
<dbReference type="InterPro" id="IPR032052">
    <property type="entry name" value="Ig_4"/>
</dbReference>
<dbReference type="InterPro" id="IPR003110">
    <property type="entry name" value="Phos_immunorcpt_sig_ITAM"/>
</dbReference>
<dbReference type="PANTHER" id="PTHR10570:SF5">
    <property type="entry name" value="T-CELL SURFACE GLYCOPROTEIN CD3 DELTA CHAIN"/>
    <property type="match status" value="1"/>
</dbReference>
<dbReference type="PANTHER" id="PTHR10570">
    <property type="entry name" value="T-CELL SURFACE GLYCOPROTEIN CD3 GAMMA CHAIN / DELTA CHAIN"/>
    <property type="match status" value="1"/>
</dbReference>
<dbReference type="Pfam" id="PF16680">
    <property type="entry name" value="Ig_4"/>
    <property type="match status" value="1"/>
</dbReference>
<dbReference type="Pfam" id="PF02189">
    <property type="entry name" value="ITAM"/>
    <property type="match status" value="1"/>
</dbReference>
<dbReference type="SMART" id="SM00077">
    <property type="entry name" value="ITAM"/>
    <property type="match status" value="1"/>
</dbReference>
<dbReference type="SUPFAM" id="SSF48726">
    <property type="entry name" value="Immunoglobulin"/>
    <property type="match status" value="1"/>
</dbReference>
<dbReference type="PROSITE" id="PS51055">
    <property type="entry name" value="ITAM_1"/>
    <property type="match status" value="1"/>
</dbReference>
<protein>
    <recommendedName>
        <fullName>T-cell surface glycoprotein CD3 delta chain</fullName>
    </recommendedName>
    <alternativeName>
        <fullName>T-cell receptor T3 delta chain</fullName>
    </alternativeName>
    <cdAntigenName>CD3d</cdAntigenName>
</protein>
<reference key="1">
    <citation type="journal article" date="1986" name="Proc. Natl. Acad. Sci. U.S.A.">
        <title>Exon/intron organization of the genes coding for the delta chains of the human and murine T-cell receptor/T3 complex.</title>
        <authorList>
            <person name="van den Elsen P."/>
            <person name="Georgopoulos K."/>
            <person name="Shepley B.-A."/>
            <person name="Orkin S."/>
            <person name="Terhorst C."/>
        </authorList>
    </citation>
    <scope>NUCLEOTIDE SEQUENCE [GENOMIC DNA]</scope>
</reference>
<reference key="2">
    <citation type="journal article" date="1984" name="Nature">
        <title>Isolation of cDNA clones encoding the 20K T3 glycoprotein of human T-cell receptor complex.</title>
        <authorList>
            <person name="van den Elsen P."/>
            <person name="Shepley B.-A."/>
            <person name="Borst J."/>
            <person name="Coligan J.E."/>
            <person name="Markham A.F."/>
            <person name="Orkin S."/>
            <person name="Terhorst C."/>
        </authorList>
    </citation>
    <scope>NUCLEOTIDE SEQUENCE [GENOMIC DNA]</scope>
</reference>
<reference key="3">
    <citation type="journal article" date="1986" name="EMBO J.">
        <title>T3 delta pre-mRNA is transcribed from a non-TATA promoter and is alternatively spliced in human T cells.</title>
        <authorList>
            <person name="Tunnacliffe A."/>
            <person name="Sims J.E."/>
            <person name="Rabbitts T.H."/>
        </authorList>
    </citation>
    <scope>NUCLEOTIDE SEQUENCE [GENOMIC DNA]</scope>
</reference>
<reference key="4">
    <citation type="journal article" date="2004" name="Genomics">
        <title>PCR isolation and cloning of novel splice variant mRNAs from known drug target genes.</title>
        <authorList>
            <person name="Jin P."/>
            <person name="Fu G.K."/>
            <person name="Wilson A.D."/>
            <person name="Yang J."/>
            <person name="Chien D."/>
            <person name="Hawkins P.R."/>
            <person name="Au-Young J."/>
            <person name="Stuve L.L."/>
        </authorList>
    </citation>
    <scope>NUCLEOTIDE SEQUENCE [LARGE SCALE MRNA] (ISOFORM 2)</scope>
</reference>
<reference key="5">
    <citation type="journal article" date="2006" name="Nature">
        <title>Human chromosome 11 DNA sequence and analysis including novel gene identification.</title>
        <authorList>
            <person name="Taylor T.D."/>
            <person name="Noguchi H."/>
            <person name="Totoki Y."/>
            <person name="Toyoda A."/>
            <person name="Kuroki Y."/>
            <person name="Dewar K."/>
            <person name="Lloyd C."/>
            <person name="Itoh T."/>
            <person name="Takeda T."/>
            <person name="Kim D.-W."/>
            <person name="She X."/>
            <person name="Barlow K.F."/>
            <person name="Bloom T."/>
            <person name="Bruford E."/>
            <person name="Chang J.L."/>
            <person name="Cuomo C.A."/>
            <person name="Eichler E."/>
            <person name="FitzGerald M.G."/>
            <person name="Jaffe D.B."/>
            <person name="LaButti K."/>
            <person name="Nicol R."/>
            <person name="Park H.-S."/>
            <person name="Seaman C."/>
            <person name="Sougnez C."/>
            <person name="Yang X."/>
            <person name="Zimmer A.R."/>
            <person name="Zody M.C."/>
            <person name="Birren B.W."/>
            <person name="Nusbaum C."/>
            <person name="Fujiyama A."/>
            <person name="Hattori M."/>
            <person name="Rogers J."/>
            <person name="Lander E.S."/>
            <person name="Sakaki Y."/>
        </authorList>
    </citation>
    <scope>NUCLEOTIDE SEQUENCE [LARGE SCALE GENOMIC DNA]</scope>
</reference>
<reference key="6">
    <citation type="journal article" date="2004" name="Genome Res.">
        <title>The status, quality, and expansion of the NIH full-length cDNA project: the Mammalian Gene Collection (MGC).</title>
        <authorList>
            <consortium name="The MGC Project Team"/>
        </authorList>
    </citation>
    <scope>NUCLEOTIDE SEQUENCE [LARGE SCALE MRNA] (ISOFORM 1)</scope>
    <source>
        <tissue>Blood</tissue>
    </source>
</reference>
<reference key="7">
    <citation type="journal article" date="1989" name="Eur. J. Biochem.">
        <title>Dephosphorylation of the human T lymphocyte CD3 antigen.</title>
        <authorList>
            <person name="Alexander D."/>
            <person name="Goris J."/>
            <person name="Marais R."/>
            <person name="Rothbard J."/>
            <person name="Merlevede W."/>
            <person name="Crumpton M.J."/>
        </authorList>
    </citation>
    <scope>PROTEIN SEQUENCE OF 128-171</scope>
</reference>
<reference key="8">
    <citation type="journal article" date="1989" name="Proc. Natl. Acad. Sci. U.S.A.">
        <title>The CD4 and CD8 antigens are coupled to a protein-tyrosine kinase (p56lck) that phosphorylates the CD3 complex.</title>
        <authorList>
            <person name="Barber E.K."/>
            <person name="Dasgupta J.D."/>
            <person name="Schlossman S.F."/>
            <person name="Trevillyan J.M."/>
            <person name="Rudd C.E."/>
        </authorList>
    </citation>
    <scope>FUNCTION</scope>
    <scope>PHOSPHORYLATION BY LCK</scope>
</reference>
<reference key="9">
    <citation type="journal article" date="1991" name="EMBO J.">
        <title>Pairwise, cooperative and inhibitory interactions describe the assembly and probable structure of the T-cell antigen receptor.</title>
        <authorList>
            <person name="Manolios N."/>
            <person name="Letourneur F."/>
            <person name="Bonifacino J.S."/>
            <person name="Klausner R.D."/>
        </authorList>
    </citation>
    <scope>SUBUNIT</scope>
</reference>
<reference key="10">
    <citation type="journal article" date="1992" name="Eur. J. Immunol.">
        <title>Biochemical evidence of the physical association of the majority of CD3 delta chains with the accessory/co-receptor molecules CD4 and CD8 on nonactivated T lymphocytes.</title>
        <authorList>
            <person name="Suzuki S."/>
            <person name="Kupsch J."/>
            <person name="Eichmann K."/>
            <person name="Saizawa M.K."/>
        </authorList>
    </citation>
    <scope>INTERACTION WITH CD4 AND CD8</scope>
</reference>
<reference key="11">
    <citation type="journal article" date="1992" name="J. Exp. Med.">
        <title>Ontogeny of human natural killer (NK) cells: fetal NK cells mediate cytolytic function and express cytoplasmic CD3 epsilon,delta proteins.</title>
        <authorList>
            <person name="Phillips J.H."/>
            <person name="Hori T."/>
            <person name="Nagler A."/>
            <person name="Bhat N."/>
            <person name="Spits H."/>
            <person name="Lanier L.L."/>
        </authorList>
    </citation>
    <scope>TISSUE SPECIFICITY</scope>
</reference>
<reference key="12">
    <citation type="journal article" date="2002" name="Cell">
        <title>The organizing principle in the formation of the T cell receptor-CD3 complex.</title>
        <authorList>
            <person name="Call M.E."/>
            <person name="Pyrdol J."/>
            <person name="Wiedmann M."/>
            <person name="Wucherpfennig K.W."/>
        </authorList>
    </citation>
    <scope>FUNCTION</scope>
    <scope>SUBUNIT</scope>
</reference>
<reference key="13">
    <citation type="journal article" date="2003" name="J. Biol. Chem.">
        <title>CD3 delta establishes a functional link between the T cell receptor and CD8.</title>
        <authorList>
            <person name="Doucey M.A."/>
            <person name="Goffin L."/>
            <person name="Naeher D."/>
            <person name="Michielin O."/>
            <person name="Baumgaertner P."/>
            <person name="Guillaume P."/>
            <person name="Palmer E."/>
            <person name="Luescher I.F."/>
        </authorList>
    </citation>
    <scope>FUNCTION</scope>
    <scope>INTERACTION WITH CD8</scope>
</reference>
<reference key="14">
    <citation type="journal article" date="2003" name="N. Engl. J. Med.">
        <title>Effect of CD3delta deficiency on maturation of alpha/beta and gamma/delta T-cell lineages in severe combined immunodeficiency.</title>
        <authorList>
            <person name="Dadi H.K."/>
            <person name="Simon A.J."/>
            <person name="Roifman C.M."/>
        </authorList>
    </citation>
    <scope>INVOLVEMENT IN IMD19</scope>
</reference>
<reference key="15">
    <citation type="journal article" date="2003" name="Proc. Natl. Acad. Sci. U.S.A.">
        <title>Profiling of tyrosine phosphorylation pathways in human cells using mass spectrometry.</title>
        <authorList>
            <person name="Salomon A.R."/>
            <person name="Ficarro S.B."/>
            <person name="Brill L.M."/>
            <person name="Brinker A."/>
            <person name="Phung Q.T."/>
            <person name="Ericson C."/>
            <person name="Sauer K."/>
            <person name="Brock A."/>
            <person name="Horn D.M."/>
            <person name="Schultz P.G."/>
            <person name="Peters E.C."/>
        </authorList>
    </citation>
    <scope>PHOSPHORYLATION [LARGE SCALE ANALYSIS] AT TYR-149</scope>
    <scope>IDENTIFICATION BY MASS SPECTROMETRY [LARGE SCALE ANALYSIS]</scope>
</reference>
<reference key="16">
    <citation type="journal article" date="2004" name="Anal. Chem.">
        <title>Robust phosphoproteomic profiling of tyrosine phosphorylation sites from human T cells using immobilized metal affinity chromatography and tandem mass spectrometry.</title>
        <authorList>
            <person name="Brill L.M."/>
            <person name="Salomon A.R."/>
            <person name="Ficarro S.B."/>
            <person name="Mukherji M."/>
            <person name="Stettler-Gill M."/>
            <person name="Peters E.C."/>
        </authorList>
    </citation>
    <scope>PHOSPHORYLATION [LARGE SCALE ANALYSIS] AT TYR-149</scope>
    <scope>IDENTIFICATION BY MASS SPECTROMETRY [LARGE SCALE ANALYSIS]</scope>
    <source>
        <tissue>Leukemic T-cell</tissue>
    </source>
</reference>
<reference key="17">
    <citation type="journal article" date="2004" name="J. Clin. Invest.">
        <title>Severe combined immunodeficiency caused by deficiency in either the delta or the epsilon subunit of CD3.</title>
        <authorList>
            <person name="de Saint Basile G."/>
            <person name="Geissmann F."/>
            <person name="Flori E."/>
            <person name="Uring-Lambert B."/>
            <person name="Soudais C."/>
            <person name="Cavazzana-Calvo M."/>
            <person name="Durandy A."/>
            <person name="Jabado N."/>
            <person name="Fischer A."/>
            <person name="Le Deist F."/>
        </authorList>
    </citation>
    <scope>INVOLVEMENT IN IMD19</scope>
</reference>
<reference key="18">
    <citation type="journal article" date="2009" name="Sci. Signal.">
        <title>Quantitative phosphoproteomic analysis of T cell receptor signaling reveals system-wide modulation of protein-protein interactions.</title>
        <authorList>
            <person name="Mayya V."/>
            <person name="Lundgren D.H."/>
            <person name="Hwang S.-I."/>
            <person name="Rezaul K."/>
            <person name="Wu L."/>
            <person name="Eng J.K."/>
            <person name="Rodionov V."/>
            <person name="Han D.K."/>
        </authorList>
    </citation>
    <scope>PHOSPHORYLATION [LARGE SCALE ANALYSIS] AT TYR-160</scope>
    <scope>IDENTIFICATION BY MASS SPECTROMETRY [LARGE SCALE ANALYSIS]</scope>
    <source>
        <tissue>Leukemic T-cell</tissue>
    </source>
</reference>
<reference key="19">
    <citation type="journal article" date="2011" name="Pediatr. Transplant.">
        <title>Genotype, phenotype, and outcomes of nine patients with T-B+NK+ SCID.</title>
        <authorList>
            <person name="Yu G.P."/>
            <person name="Nadeau K.C."/>
            <person name="Berk D.R."/>
            <person name="de Saint Basile G."/>
            <person name="Lambert N."/>
            <person name="Knapnougel P."/>
            <person name="Roberts J."/>
            <person name="Kavanau K."/>
            <person name="Dunn E."/>
            <person name="Stiehm E.R."/>
            <person name="Lewis D.B."/>
            <person name="Umetsu D.T."/>
            <person name="Puck J.M."/>
            <person name="Cowan M.J."/>
        </authorList>
    </citation>
    <scope>INVOLVEMENT IN IMD19</scope>
</reference>
<reference key="20">
    <citation type="journal article" date="2004" name="Proc. Natl. Acad. Sci. U.S.A.">
        <title>Crystal structure of a human CD3-epsilon/delta dimer in complex with a UCHT1 single-chain antibody fragment.</title>
        <authorList>
            <person name="Arnett K.L."/>
            <person name="Harrison S.C."/>
            <person name="Wiley D.C."/>
        </authorList>
    </citation>
    <scope>X-RAY CRYSTALLOGRAPHY (1.9 ANGSTROMS) OF 23-100 IN COMPLEX WITH CD3E AND ANTIBODY FRAGMENT</scope>
    <scope>SUBUNIT</scope>
    <scope>DISULFIDE BOND</scope>
</reference>
<proteinExistence type="evidence at protein level"/>
<evidence type="ECO:0000255" key="1"/>
<evidence type="ECO:0000255" key="2">
    <source>
        <dbReference type="PROSITE-ProRule" id="PRU00379"/>
    </source>
</evidence>
<evidence type="ECO:0000269" key="3">
    <source>
    </source>
</evidence>
<evidence type="ECO:0000269" key="4">
    <source>
    </source>
</evidence>
<evidence type="ECO:0000269" key="5">
    <source>
    </source>
</evidence>
<evidence type="ECO:0000269" key="6">
    <source>
    </source>
</evidence>
<evidence type="ECO:0000269" key="7">
    <source>
    </source>
</evidence>
<evidence type="ECO:0000269" key="8">
    <source>
    </source>
</evidence>
<evidence type="ECO:0000269" key="9">
    <source>
    </source>
</evidence>
<evidence type="ECO:0000269" key="10">
    <source>
    </source>
</evidence>
<evidence type="ECO:0000269" key="11">
    <source>
    </source>
</evidence>
<evidence type="ECO:0000269" key="12">
    <source>
    </source>
</evidence>
<evidence type="ECO:0000303" key="13">
    <source>
    </source>
</evidence>
<evidence type="ECO:0007744" key="14">
    <source>
    </source>
</evidence>
<evidence type="ECO:0007744" key="15">
    <source>
    </source>
</evidence>
<evidence type="ECO:0007744" key="16">
    <source>
    </source>
</evidence>
<evidence type="ECO:0007829" key="17">
    <source>
        <dbReference type="PDB" id="1XIW"/>
    </source>
</evidence>
<evidence type="ECO:0007829" key="18">
    <source>
        <dbReference type="PDB" id="7PHR"/>
    </source>
</evidence>
<evidence type="ECO:0007829" key="19">
    <source>
        <dbReference type="PDB" id="8ES8"/>
    </source>
</evidence>
<gene>
    <name type="primary">CD3D</name>
    <name type="synonym">T3D</name>
</gene>